<dbReference type="EC" id="2.7.7.3" evidence="1"/>
<dbReference type="EMBL" id="CP000076">
    <property type="protein sequence ID" value="AAY95058.1"/>
    <property type="molecule type" value="Genomic_DNA"/>
</dbReference>
<dbReference type="RefSeq" id="WP_003176711.1">
    <property type="nucleotide sequence ID" value="NC_004129.6"/>
</dbReference>
<dbReference type="SMR" id="Q4K4A7"/>
<dbReference type="STRING" id="220664.PFL_5868"/>
<dbReference type="GeneID" id="97919180"/>
<dbReference type="KEGG" id="pfl:PFL_5868"/>
<dbReference type="eggNOG" id="COG0669">
    <property type="taxonomic scope" value="Bacteria"/>
</dbReference>
<dbReference type="HOGENOM" id="CLU_100149_0_1_6"/>
<dbReference type="UniPathway" id="UPA00241">
    <property type="reaction ID" value="UER00355"/>
</dbReference>
<dbReference type="Proteomes" id="UP000008540">
    <property type="component" value="Chromosome"/>
</dbReference>
<dbReference type="GO" id="GO:0005737">
    <property type="term" value="C:cytoplasm"/>
    <property type="evidence" value="ECO:0007669"/>
    <property type="project" value="UniProtKB-SubCell"/>
</dbReference>
<dbReference type="GO" id="GO:0005524">
    <property type="term" value="F:ATP binding"/>
    <property type="evidence" value="ECO:0007669"/>
    <property type="project" value="UniProtKB-KW"/>
</dbReference>
<dbReference type="GO" id="GO:0004595">
    <property type="term" value="F:pantetheine-phosphate adenylyltransferase activity"/>
    <property type="evidence" value="ECO:0007669"/>
    <property type="project" value="UniProtKB-UniRule"/>
</dbReference>
<dbReference type="GO" id="GO:0015937">
    <property type="term" value="P:coenzyme A biosynthetic process"/>
    <property type="evidence" value="ECO:0007669"/>
    <property type="project" value="UniProtKB-UniRule"/>
</dbReference>
<dbReference type="CDD" id="cd02163">
    <property type="entry name" value="PPAT"/>
    <property type="match status" value="1"/>
</dbReference>
<dbReference type="Gene3D" id="3.40.50.620">
    <property type="entry name" value="HUPs"/>
    <property type="match status" value="1"/>
</dbReference>
<dbReference type="HAMAP" id="MF_00151">
    <property type="entry name" value="PPAT_bact"/>
    <property type="match status" value="1"/>
</dbReference>
<dbReference type="InterPro" id="IPR004821">
    <property type="entry name" value="Cyt_trans-like"/>
</dbReference>
<dbReference type="InterPro" id="IPR001980">
    <property type="entry name" value="PPAT"/>
</dbReference>
<dbReference type="InterPro" id="IPR014729">
    <property type="entry name" value="Rossmann-like_a/b/a_fold"/>
</dbReference>
<dbReference type="NCBIfam" id="TIGR01510">
    <property type="entry name" value="coaD_prev_kdtB"/>
    <property type="match status" value="1"/>
</dbReference>
<dbReference type="NCBIfam" id="TIGR00125">
    <property type="entry name" value="cyt_tran_rel"/>
    <property type="match status" value="1"/>
</dbReference>
<dbReference type="PANTHER" id="PTHR21342">
    <property type="entry name" value="PHOSPHOPANTETHEINE ADENYLYLTRANSFERASE"/>
    <property type="match status" value="1"/>
</dbReference>
<dbReference type="PANTHER" id="PTHR21342:SF1">
    <property type="entry name" value="PHOSPHOPANTETHEINE ADENYLYLTRANSFERASE"/>
    <property type="match status" value="1"/>
</dbReference>
<dbReference type="Pfam" id="PF01467">
    <property type="entry name" value="CTP_transf_like"/>
    <property type="match status" value="1"/>
</dbReference>
<dbReference type="PRINTS" id="PR01020">
    <property type="entry name" value="LPSBIOSNTHSS"/>
</dbReference>
<dbReference type="SUPFAM" id="SSF52374">
    <property type="entry name" value="Nucleotidylyl transferase"/>
    <property type="match status" value="1"/>
</dbReference>
<organism>
    <name type="scientific">Pseudomonas fluorescens (strain ATCC BAA-477 / NRRL B-23932 / Pf-5)</name>
    <dbReference type="NCBI Taxonomy" id="220664"/>
    <lineage>
        <taxon>Bacteria</taxon>
        <taxon>Pseudomonadati</taxon>
        <taxon>Pseudomonadota</taxon>
        <taxon>Gammaproteobacteria</taxon>
        <taxon>Pseudomonadales</taxon>
        <taxon>Pseudomonadaceae</taxon>
        <taxon>Pseudomonas</taxon>
    </lineage>
</organism>
<proteinExistence type="inferred from homology"/>
<keyword id="KW-0067">ATP-binding</keyword>
<keyword id="KW-0173">Coenzyme A biosynthesis</keyword>
<keyword id="KW-0963">Cytoplasm</keyword>
<keyword id="KW-0460">Magnesium</keyword>
<keyword id="KW-0547">Nucleotide-binding</keyword>
<keyword id="KW-0548">Nucleotidyltransferase</keyword>
<keyword id="KW-0808">Transferase</keyword>
<sequence length="159" mass="17822">MNRVLYPGTFDPITKGHGDLVERASRLFDHVIIAVAASPKKNPLFPLEQRVELAREVTKHLPNVEVVGFSTLLAHFAKEQNANVFLRGLRAVSDFEYEFQLANMNRQLAPDVESLFLTPSERYSFISSTLVREIAALGGDITKFVHPAVADALTLRFKK</sequence>
<reference key="1">
    <citation type="journal article" date="2005" name="Nat. Biotechnol.">
        <title>Complete genome sequence of the plant commensal Pseudomonas fluorescens Pf-5.</title>
        <authorList>
            <person name="Paulsen I.T."/>
            <person name="Press C.M."/>
            <person name="Ravel J."/>
            <person name="Kobayashi D.Y."/>
            <person name="Myers G.S.A."/>
            <person name="Mavrodi D.V."/>
            <person name="DeBoy R.T."/>
            <person name="Seshadri R."/>
            <person name="Ren Q."/>
            <person name="Madupu R."/>
            <person name="Dodson R.J."/>
            <person name="Durkin A.S."/>
            <person name="Brinkac L.M."/>
            <person name="Daugherty S.C."/>
            <person name="Sullivan S.A."/>
            <person name="Rosovitz M.J."/>
            <person name="Gwinn M.L."/>
            <person name="Zhou L."/>
            <person name="Schneider D.J."/>
            <person name="Cartinhour S.W."/>
            <person name="Nelson W.C."/>
            <person name="Weidman J."/>
            <person name="Watkins K."/>
            <person name="Tran K."/>
            <person name="Khouri H."/>
            <person name="Pierson E.A."/>
            <person name="Pierson L.S. III"/>
            <person name="Thomashow L.S."/>
            <person name="Loper J.E."/>
        </authorList>
    </citation>
    <scope>NUCLEOTIDE SEQUENCE [LARGE SCALE GENOMIC DNA]</scope>
    <source>
        <strain>ATCC BAA-477 / NRRL B-23932 / Pf-5</strain>
    </source>
</reference>
<gene>
    <name evidence="1" type="primary">coaD</name>
    <name type="ordered locus">PFL_5868</name>
</gene>
<feature type="chain" id="PRO_1000011207" description="Phosphopantetheine adenylyltransferase">
    <location>
        <begin position="1"/>
        <end position="159"/>
    </location>
</feature>
<feature type="binding site" evidence="1">
    <location>
        <begin position="9"/>
        <end position="10"/>
    </location>
    <ligand>
        <name>ATP</name>
        <dbReference type="ChEBI" id="CHEBI:30616"/>
    </ligand>
</feature>
<feature type="binding site" evidence="1">
    <location>
        <position position="9"/>
    </location>
    <ligand>
        <name>substrate</name>
    </ligand>
</feature>
<feature type="binding site" evidence="1">
    <location>
        <position position="17"/>
    </location>
    <ligand>
        <name>ATP</name>
        <dbReference type="ChEBI" id="CHEBI:30616"/>
    </ligand>
</feature>
<feature type="binding site" evidence="1">
    <location>
        <position position="41"/>
    </location>
    <ligand>
        <name>substrate</name>
    </ligand>
</feature>
<feature type="binding site" evidence="1">
    <location>
        <position position="73"/>
    </location>
    <ligand>
        <name>substrate</name>
    </ligand>
</feature>
<feature type="binding site" evidence="1">
    <location>
        <position position="87"/>
    </location>
    <ligand>
        <name>substrate</name>
    </ligand>
</feature>
<feature type="binding site" evidence="1">
    <location>
        <begin position="88"/>
        <end position="90"/>
    </location>
    <ligand>
        <name>ATP</name>
        <dbReference type="ChEBI" id="CHEBI:30616"/>
    </ligand>
</feature>
<feature type="binding site" evidence="1">
    <location>
        <position position="98"/>
    </location>
    <ligand>
        <name>ATP</name>
        <dbReference type="ChEBI" id="CHEBI:30616"/>
    </ligand>
</feature>
<feature type="binding site" evidence="1">
    <location>
        <begin position="123"/>
        <end position="129"/>
    </location>
    <ligand>
        <name>ATP</name>
        <dbReference type="ChEBI" id="CHEBI:30616"/>
    </ligand>
</feature>
<feature type="site" description="Transition state stabilizer" evidence="1">
    <location>
        <position position="17"/>
    </location>
</feature>
<name>COAD_PSEF5</name>
<evidence type="ECO:0000255" key="1">
    <source>
        <dbReference type="HAMAP-Rule" id="MF_00151"/>
    </source>
</evidence>
<comment type="function">
    <text evidence="1">Reversibly transfers an adenylyl group from ATP to 4'-phosphopantetheine, yielding dephospho-CoA (dPCoA) and pyrophosphate.</text>
</comment>
<comment type="catalytic activity">
    <reaction evidence="1">
        <text>(R)-4'-phosphopantetheine + ATP + H(+) = 3'-dephospho-CoA + diphosphate</text>
        <dbReference type="Rhea" id="RHEA:19801"/>
        <dbReference type="ChEBI" id="CHEBI:15378"/>
        <dbReference type="ChEBI" id="CHEBI:30616"/>
        <dbReference type="ChEBI" id="CHEBI:33019"/>
        <dbReference type="ChEBI" id="CHEBI:57328"/>
        <dbReference type="ChEBI" id="CHEBI:61723"/>
        <dbReference type="EC" id="2.7.7.3"/>
    </reaction>
</comment>
<comment type="cofactor">
    <cofactor evidence="1">
        <name>Mg(2+)</name>
        <dbReference type="ChEBI" id="CHEBI:18420"/>
    </cofactor>
</comment>
<comment type="pathway">
    <text evidence="1">Cofactor biosynthesis; coenzyme A biosynthesis; CoA from (R)-pantothenate: step 4/5.</text>
</comment>
<comment type="subunit">
    <text evidence="1">Homohexamer.</text>
</comment>
<comment type="subcellular location">
    <subcellularLocation>
        <location evidence="1">Cytoplasm</location>
    </subcellularLocation>
</comment>
<comment type="similarity">
    <text evidence="1">Belongs to the bacterial CoaD family.</text>
</comment>
<accession>Q4K4A7</accession>
<protein>
    <recommendedName>
        <fullName evidence="1">Phosphopantetheine adenylyltransferase</fullName>
        <ecNumber evidence="1">2.7.7.3</ecNumber>
    </recommendedName>
    <alternativeName>
        <fullName evidence="1">Dephospho-CoA pyrophosphorylase</fullName>
    </alternativeName>
    <alternativeName>
        <fullName evidence="1">Pantetheine-phosphate adenylyltransferase</fullName>
        <shortName evidence="1">PPAT</shortName>
    </alternativeName>
</protein>